<organism>
    <name type="scientific">Arabidopsis thaliana</name>
    <name type="common">Mouse-ear cress</name>
    <dbReference type="NCBI Taxonomy" id="3702"/>
    <lineage>
        <taxon>Eukaryota</taxon>
        <taxon>Viridiplantae</taxon>
        <taxon>Streptophyta</taxon>
        <taxon>Embryophyta</taxon>
        <taxon>Tracheophyta</taxon>
        <taxon>Spermatophyta</taxon>
        <taxon>Magnoliopsida</taxon>
        <taxon>eudicotyledons</taxon>
        <taxon>Gunneridae</taxon>
        <taxon>Pentapetalae</taxon>
        <taxon>rosids</taxon>
        <taxon>malvids</taxon>
        <taxon>Brassicales</taxon>
        <taxon>Brassicaceae</taxon>
        <taxon>Camelineae</taxon>
        <taxon>Arabidopsis</taxon>
    </lineage>
</organism>
<sequence length="419" mass="44594">MEEREGTNINNIPTSFGLKQHETPLPPPGYPPRSENPNLFPVGQSSTSSAAAAVKPSENVAPPFSLTMPVENSSSELKKKRGRPRKYNPDGSLAVTLSPMPISSSVPLTSEFGSRKRGRGRGRGRGRGRGRGQGQGSREPNNNNNDNNWLKNPQMFEFNNNTPTSGGGGPAEIVSPSFTPHVLTVNAGEDVTMKIMTFSQQGSRAICILSANGPISNVTLRQSMTSGGTLTYEGHFEILSLTGSFIPSESGGTRSRAGGMSVSLAGQDGRVFGGGLAGLFIAAGPVQVMVGSFIAGQEESQQQQQQIKKQRRERLGIPTTTQASNISFGGSAEDPKARYGLNKPVVIQPPPVSAPPVSFSHEPSTNTVHGYYANNTANHIKDLFSSLPGEDREEDEDDLEGEDDEEFGGHSESDTEVPS</sequence>
<gene>
    <name evidence="7" type="primary">AHL4</name>
    <name evidence="9" type="ordered locus">At5g51590</name>
    <name evidence="10" type="ORF">K17N15.14</name>
</gene>
<reference key="1">
    <citation type="journal article" date="2000" name="DNA Res.">
        <title>Structural analysis of Arabidopsis thaliana chromosome 5. X. Sequence features of the regions of 3,076,755 bp covered by sixty P1 and TAC clones.</title>
        <authorList>
            <person name="Sato S."/>
            <person name="Nakamura Y."/>
            <person name="Kaneko T."/>
            <person name="Katoh T."/>
            <person name="Asamizu E."/>
            <person name="Kotani H."/>
            <person name="Tabata S."/>
        </authorList>
    </citation>
    <scope>NUCLEOTIDE SEQUENCE [LARGE SCALE GENOMIC DNA]</scope>
    <source>
        <strain>cv. Columbia</strain>
    </source>
</reference>
<reference key="2">
    <citation type="journal article" date="2017" name="Plant J.">
        <title>Araport11: a complete reannotation of the Arabidopsis thaliana reference genome.</title>
        <authorList>
            <person name="Cheng C.Y."/>
            <person name="Krishnakumar V."/>
            <person name="Chan A.P."/>
            <person name="Thibaud-Nissen F."/>
            <person name="Schobel S."/>
            <person name="Town C.D."/>
        </authorList>
    </citation>
    <scope>GENOME REANNOTATION</scope>
    <source>
        <strain>cv. Columbia</strain>
    </source>
</reference>
<reference key="3">
    <citation type="submission" date="2009-03" db="EMBL/GenBank/DDBJ databases">
        <title>ORF cloning and analysis of Arabidopsis transcription factor genes.</title>
        <authorList>
            <person name="Fujita M."/>
            <person name="Mizukado S."/>
            <person name="Seki M."/>
            <person name="Shinozaki K."/>
            <person name="Mitsuda N."/>
            <person name="Takiguchi Y."/>
            <person name="Takagi M."/>
        </authorList>
    </citation>
    <scope>NUCLEOTIDE SEQUENCE [LARGE SCALE MRNA]</scope>
</reference>
<reference key="4">
    <citation type="journal article" date="2004" name="Plant Mol. Biol.">
        <title>Identification of a novel plant MAR DNA binding protein localized on chromosomal surfaces.</title>
        <authorList>
            <person name="Fujimoto S."/>
            <person name="Matsunaga S."/>
            <person name="Yonemura M."/>
            <person name="Uchiyama S."/>
            <person name="Azuma T."/>
            <person name="Fukui K."/>
        </authorList>
    </citation>
    <scope>IDENTIFICATION</scope>
    <scope>GENE FAMILY</scope>
    <scope>NOMENCLATURE</scope>
    <source>
        <strain>cv. Columbia</strain>
    </source>
</reference>
<reference key="5">
    <citation type="journal article" date="2013" name="Plant Cell">
        <title>Cell-to-cell movement of two interacting AT-hook factors in Arabidopsis root vascular tissue patterning.</title>
        <authorList>
            <person name="Zhou J."/>
            <person name="Wang X."/>
            <person name="Lee J.Y."/>
            <person name="Lee J.Y."/>
        </authorList>
    </citation>
    <scope>FUNCTION</scope>
    <scope>DISRUPTION PHENOTYPE</scope>
    <scope>INTERACTION WITH AHL3</scope>
    <scope>SUBCELLULAR LOCATION</scope>
    <scope>TISSUE SPECIFICITY</scope>
</reference>
<reference key="6">
    <citation type="journal article" date="2013" name="Proc. Natl. Acad. Sci. U.S.A.">
        <title>Arabidopsis thaliana AHL family modulates hypocotyl growth redundantly by interacting with each other via the PPC/DUF296 domain.</title>
        <authorList>
            <person name="Zhao J."/>
            <person name="Favero D.S."/>
            <person name="Peng H."/>
            <person name="Neff M.M."/>
        </authorList>
    </citation>
    <scope>GENE FAMILY</scope>
    <scope>DOMAIN PPC</scope>
</reference>
<dbReference type="EMBL" id="AB018109">
    <property type="protein sequence ID" value="BAB08675.1"/>
    <property type="molecule type" value="Genomic_DNA"/>
</dbReference>
<dbReference type="EMBL" id="CP002688">
    <property type="protein sequence ID" value="AED96101.1"/>
    <property type="molecule type" value="Genomic_DNA"/>
</dbReference>
<dbReference type="EMBL" id="AB493788">
    <property type="protein sequence ID" value="BAH30626.1"/>
    <property type="molecule type" value="mRNA"/>
</dbReference>
<dbReference type="EMBL" id="BR000340">
    <property type="protein sequence ID" value="FAA00275.1"/>
    <property type="molecule type" value="mRNA"/>
</dbReference>
<dbReference type="RefSeq" id="NP_199972.1">
    <property type="nucleotide sequence ID" value="NM_124538.4"/>
</dbReference>
<dbReference type="SMR" id="Q9FHM5"/>
<dbReference type="FunCoup" id="Q9FHM5">
    <property type="interactions" value="18"/>
</dbReference>
<dbReference type="STRING" id="3702.Q9FHM5"/>
<dbReference type="PaxDb" id="3702-AT5G51590.1"/>
<dbReference type="ProteomicsDB" id="244848"/>
<dbReference type="EnsemblPlants" id="AT5G51590.1">
    <property type="protein sequence ID" value="AT5G51590.1"/>
    <property type="gene ID" value="AT5G51590"/>
</dbReference>
<dbReference type="GeneID" id="835233"/>
<dbReference type="Gramene" id="AT5G51590.1">
    <property type="protein sequence ID" value="AT5G51590.1"/>
    <property type="gene ID" value="AT5G51590"/>
</dbReference>
<dbReference type="KEGG" id="ath:AT5G51590"/>
<dbReference type="Araport" id="AT5G51590"/>
<dbReference type="TAIR" id="AT5G51590">
    <property type="gene designation" value="AHL4"/>
</dbReference>
<dbReference type="eggNOG" id="ENOG502QTAR">
    <property type="taxonomic scope" value="Eukaryota"/>
</dbReference>
<dbReference type="HOGENOM" id="CLU_039808_0_0_1"/>
<dbReference type="InParanoid" id="Q9FHM5"/>
<dbReference type="OMA" id="NNWLKNP"/>
<dbReference type="PhylomeDB" id="Q9FHM5"/>
<dbReference type="CD-CODE" id="4299E36E">
    <property type="entry name" value="Nucleolus"/>
</dbReference>
<dbReference type="PRO" id="PR:Q9FHM5"/>
<dbReference type="Proteomes" id="UP000006548">
    <property type="component" value="Chromosome 5"/>
</dbReference>
<dbReference type="ExpressionAtlas" id="Q9FHM5">
    <property type="expression patterns" value="baseline and differential"/>
</dbReference>
<dbReference type="GO" id="GO:0005634">
    <property type="term" value="C:nucleus"/>
    <property type="evidence" value="ECO:0000314"/>
    <property type="project" value="TAIR"/>
</dbReference>
<dbReference type="GO" id="GO:0003680">
    <property type="term" value="F:minor groove of adenine-thymine-rich DNA binding"/>
    <property type="evidence" value="ECO:0007669"/>
    <property type="project" value="InterPro"/>
</dbReference>
<dbReference type="GO" id="GO:0010051">
    <property type="term" value="P:xylem and phloem pattern formation"/>
    <property type="evidence" value="ECO:0000315"/>
    <property type="project" value="UniProtKB"/>
</dbReference>
<dbReference type="GO" id="GO:0010089">
    <property type="term" value="P:xylem development"/>
    <property type="evidence" value="ECO:0000315"/>
    <property type="project" value="TAIR"/>
</dbReference>
<dbReference type="CDD" id="cd11378">
    <property type="entry name" value="DUF296"/>
    <property type="match status" value="1"/>
</dbReference>
<dbReference type="FunFam" id="3.30.1330.80:FF:000003">
    <property type="entry name" value="AT-hook motif nuclear-localized protein 1-like"/>
    <property type="match status" value="1"/>
</dbReference>
<dbReference type="Gene3D" id="3.30.1330.80">
    <property type="entry name" value="Hypothetical protein, similar to alpha- acetolactate decarboxylase, domain 2"/>
    <property type="match status" value="1"/>
</dbReference>
<dbReference type="InterPro" id="IPR039605">
    <property type="entry name" value="AHL"/>
</dbReference>
<dbReference type="InterPro" id="IPR005175">
    <property type="entry name" value="PPC_dom"/>
</dbReference>
<dbReference type="PANTHER" id="PTHR31500:SF52">
    <property type="entry name" value="AT-HOOK MOTIF NUCLEAR-LOCALIZED PROTEIN 4"/>
    <property type="match status" value="1"/>
</dbReference>
<dbReference type="PANTHER" id="PTHR31500">
    <property type="entry name" value="AT-HOOK MOTIF NUCLEAR-LOCALIZED PROTEIN 9"/>
    <property type="match status" value="1"/>
</dbReference>
<dbReference type="Pfam" id="PF03479">
    <property type="entry name" value="PCC"/>
    <property type="match status" value="1"/>
</dbReference>
<dbReference type="SUPFAM" id="SSF117856">
    <property type="entry name" value="AF0104/ALDC/Ptd012-like"/>
    <property type="match status" value="1"/>
</dbReference>
<dbReference type="PROSITE" id="PS51742">
    <property type="entry name" value="PPC"/>
    <property type="match status" value="1"/>
</dbReference>
<feature type="chain" id="PRO_0000432022" description="AT-hook motif nuclear-localized protein 4">
    <location>
        <begin position="1"/>
        <end position="419"/>
    </location>
</feature>
<feature type="domain" description="PPC" evidence="3">
    <location>
        <begin position="174"/>
        <end position="314"/>
    </location>
</feature>
<feature type="DNA-binding region" description="A.T hook" evidence="2">
    <location>
        <begin position="78"/>
        <end position="90"/>
    </location>
</feature>
<feature type="region of interest" description="Disordered" evidence="4">
    <location>
        <begin position="1"/>
        <end position="168"/>
    </location>
</feature>
<feature type="region of interest" description="Disordered" evidence="4">
    <location>
        <begin position="301"/>
        <end position="337"/>
    </location>
</feature>
<feature type="region of interest" description="Disordered" evidence="4">
    <location>
        <begin position="382"/>
        <end position="419"/>
    </location>
</feature>
<feature type="short sequence motif" description="Bipartite nuclear localization signal" evidence="8">
    <location>
        <begin position="78"/>
        <end position="86"/>
    </location>
</feature>
<feature type="compositionally biased region" description="Polar residues" evidence="4">
    <location>
        <begin position="101"/>
        <end position="112"/>
    </location>
</feature>
<feature type="compositionally biased region" description="Basic residues" evidence="4">
    <location>
        <begin position="115"/>
        <end position="130"/>
    </location>
</feature>
<feature type="compositionally biased region" description="Low complexity" evidence="4">
    <location>
        <begin position="136"/>
        <end position="148"/>
    </location>
</feature>
<feature type="compositionally biased region" description="Polar residues" evidence="4">
    <location>
        <begin position="318"/>
        <end position="328"/>
    </location>
</feature>
<feature type="compositionally biased region" description="Acidic residues" evidence="4">
    <location>
        <begin position="391"/>
        <end position="406"/>
    </location>
</feature>
<name>AHL4_ARATH</name>
<comment type="function">
    <text evidence="1 5">Transcription factor that specifically binds AT-rich DNA sequences related to the nuclear matrix attachment regions (MARs) (By similarity). Acts redundantly with AHL3 to regulate the formation of tissue boundary between the xylem and procambium in the root meristem. Cell-to-cell movement of AHL4 from the procambium to the xylem is critical for its function in root vascular patterning (PubMed:23335615).</text>
</comment>
<comment type="subunit">
    <text evidence="5">Homodimer. Interacts with AHL3.</text>
</comment>
<comment type="subcellular location">
    <subcellularLocation>
        <location evidence="5">Nucleus</location>
    </subcellularLocation>
</comment>
<comment type="tissue specificity">
    <text evidence="5">Predominantly expressed in the stele of the root meristem with a specificity to the procambium.</text>
</comment>
<comment type="domain">
    <text evidence="6">The PPC domain mediates interactions between AHL proteins.</text>
</comment>
<comment type="disruption phenotype">
    <text evidence="5">Misspecification of tissue boundaries between the xylem and procambium.</text>
</comment>
<proteinExistence type="evidence at protein level"/>
<evidence type="ECO:0000250" key="1">
    <source>
        <dbReference type="UniProtKB" id="Q8VYJ2"/>
    </source>
</evidence>
<evidence type="ECO:0000255" key="2"/>
<evidence type="ECO:0000255" key="3">
    <source>
        <dbReference type="PROSITE-ProRule" id="PRU01078"/>
    </source>
</evidence>
<evidence type="ECO:0000256" key="4">
    <source>
        <dbReference type="SAM" id="MobiDB-lite"/>
    </source>
</evidence>
<evidence type="ECO:0000269" key="5">
    <source>
    </source>
</evidence>
<evidence type="ECO:0000269" key="6">
    <source>
    </source>
</evidence>
<evidence type="ECO:0000303" key="7">
    <source>
    </source>
</evidence>
<evidence type="ECO:0000305" key="8"/>
<evidence type="ECO:0000312" key="9">
    <source>
        <dbReference type="Araport" id="AT5G51590"/>
    </source>
</evidence>
<evidence type="ECO:0000312" key="10">
    <source>
        <dbReference type="EMBL" id="BAB08675.1"/>
    </source>
</evidence>
<evidence type="ECO:0000312" key="11">
    <source>
        <dbReference type="EMBL" id="FAA00275.1"/>
    </source>
</evidence>
<accession>Q9FHM5</accession>
<protein>
    <recommendedName>
        <fullName evidence="11">AT-hook motif nuclear-localized protein 4</fullName>
    </recommendedName>
</protein>
<keyword id="KW-0238">DNA-binding</keyword>
<keyword id="KW-0539">Nucleus</keyword>
<keyword id="KW-1185">Reference proteome</keyword>
<keyword id="KW-0804">Transcription</keyword>
<keyword id="KW-0805">Transcription regulation</keyword>